<comment type="function">
    <text evidence="1">Protein S19 forms a complex with S13 that binds strongly to the 16S ribosomal RNA.</text>
</comment>
<comment type="similarity">
    <text evidence="1">Belongs to the universal ribosomal protein uS19 family.</text>
</comment>
<feature type="chain" id="PRO_1000146372" description="Small ribosomal subunit protein uS19">
    <location>
        <begin position="1"/>
        <end position="93"/>
    </location>
</feature>
<keyword id="KW-1185">Reference proteome</keyword>
<keyword id="KW-0687">Ribonucleoprotein</keyword>
<keyword id="KW-0689">Ribosomal protein</keyword>
<keyword id="KW-0694">RNA-binding</keyword>
<keyword id="KW-0699">rRNA-binding</keyword>
<proteinExistence type="inferred from homology"/>
<reference key="1">
    <citation type="submission" date="2005-03" db="EMBL/GenBank/DDBJ databases">
        <title>Brevibacillus brevis strain 47, complete genome.</title>
        <authorList>
            <person name="Hosoyama A."/>
            <person name="Yamada R."/>
            <person name="Hongo Y."/>
            <person name="Terui Y."/>
            <person name="Ankai A."/>
            <person name="Masuyama W."/>
            <person name="Sekiguchi M."/>
            <person name="Takeda T."/>
            <person name="Asano K."/>
            <person name="Ohji S."/>
            <person name="Ichikawa N."/>
            <person name="Narita S."/>
            <person name="Aoki N."/>
            <person name="Miura H."/>
            <person name="Matsushita S."/>
            <person name="Sekigawa T."/>
            <person name="Yamagata H."/>
            <person name="Yoshikawa H."/>
            <person name="Udaka S."/>
            <person name="Tanikawa S."/>
            <person name="Fujita N."/>
        </authorList>
    </citation>
    <scope>NUCLEOTIDE SEQUENCE [LARGE SCALE GENOMIC DNA]</scope>
    <source>
        <strain>47 / JCM 6285 / NBRC 100599</strain>
    </source>
</reference>
<sequence>MGRSLKKGPFVDDHLMKKVDEQNEKNEKRVIKTWSRRSTIFPDFVGHTFAVYDGRKHVPVYVSEDMVGHKLGEFAPTRTFKGHVDNDKKSKKR</sequence>
<gene>
    <name evidence="1" type="primary">rpsS</name>
    <name type="ordered locus">BBR47_02250</name>
</gene>
<evidence type="ECO:0000255" key="1">
    <source>
        <dbReference type="HAMAP-Rule" id="MF_00531"/>
    </source>
</evidence>
<evidence type="ECO:0000305" key="2"/>
<name>RS19_BREBN</name>
<protein>
    <recommendedName>
        <fullName evidence="1">Small ribosomal subunit protein uS19</fullName>
    </recommendedName>
    <alternativeName>
        <fullName evidence="2">30S ribosomal protein S19</fullName>
    </alternativeName>
</protein>
<organism>
    <name type="scientific">Brevibacillus brevis (strain 47 / JCM 6285 / NBRC 100599)</name>
    <dbReference type="NCBI Taxonomy" id="358681"/>
    <lineage>
        <taxon>Bacteria</taxon>
        <taxon>Bacillati</taxon>
        <taxon>Bacillota</taxon>
        <taxon>Bacilli</taxon>
        <taxon>Bacillales</taxon>
        <taxon>Paenibacillaceae</taxon>
        <taxon>Brevibacillus</taxon>
    </lineage>
</organism>
<accession>C0ZII4</accession>
<dbReference type="EMBL" id="AP008955">
    <property type="protein sequence ID" value="BAH41202.1"/>
    <property type="molecule type" value="Genomic_DNA"/>
</dbReference>
<dbReference type="RefSeq" id="WP_007716246.1">
    <property type="nucleotide sequence ID" value="NC_012491.1"/>
</dbReference>
<dbReference type="SMR" id="C0ZII4"/>
<dbReference type="STRING" id="358681.BBR47_02250"/>
<dbReference type="GeneID" id="95752111"/>
<dbReference type="KEGG" id="bbe:BBR47_02250"/>
<dbReference type="eggNOG" id="COG0185">
    <property type="taxonomic scope" value="Bacteria"/>
</dbReference>
<dbReference type="HOGENOM" id="CLU_144911_0_1_9"/>
<dbReference type="Proteomes" id="UP000001877">
    <property type="component" value="Chromosome"/>
</dbReference>
<dbReference type="GO" id="GO:0005737">
    <property type="term" value="C:cytoplasm"/>
    <property type="evidence" value="ECO:0007669"/>
    <property type="project" value="UniProtKB-ARBA"/>
</dbReference>
<dbReference type="GO" id="GO:0015935">
    <property type="term" value="C:small ribosomal subunit"/>
    <property type="evidence" value="ECO:0007669"/>
    <property type="project" value="InterPro"/>
</dbReference>
<dbReference type="GO" id="GO:0019843">
    <property type="term" value="F:rRNA binding"/>
    <property type="evidence" value="ECO:0007669"/>
    <property type="project" value="UniProtKB-UniRule"/>
</dbReference>
<dbReference type="GO" id="GO:0003735">
    <property type="term" value="F:structural constituent of ribosome"/>
    <property type="evidence" value="ECO:0007669"/>
    <property type="project" value="InterPro"/>
</dbReference>
<dbReference type="GO" id="GO:0000028">
    <property type="term" value="P:ribosomal small subunit assembly"/>
    <property type="evidence" value="ECO:0007669"/>
    <property type="project" value="TreeGrafter"/>
</dbReference>
<dbReference type="GO" id="GO:0006412">
    <property type="term" value="P:translation"/>
    <property type="evidence" value="ECO:0007669"/>
    <property type="project" value="UniProtKB-UniRule"/>
</dbReference>
<dbReference type="FunFam" id="3.30.860.10:FF:000001">
    <property type="entry name" value="30S ribosomal protein S19"/>
    <property type="match status" value="1"/>
</dbReference>
<dbReference type="Gene3D" id="3.30.860.10">
    <property type="entry name" value="30s Ribosomal Protein S19, Chain A"/>
    <property type="match status" value="1"/>
</dbReference>
<dbReference type="HAMAP" id="MF_00531">
    <property type="entry name" value="Ribosomal_uS19"/>
    <property type="match status" value="1"/>
</dbReference>
<dbReference type="InterPro" id="IPR002222">
    <property type="entry name" value="Ribosomal_uS19"/>
</dbReference>
<dbReference type="InterPro" id="IPR005732">
    <property type="entry name" value="Ribosomal_uS19_bac-type"/>
</dbReference>
<dbReference type="InterPro" id="IPR020934">
    <property type="entry name" value="Ribosomal_uS19_CS"/>
</dbReference>
<dbReference type="InterPro" id="IPR023575">
    <property type="entry name" value="Ribosomal_uS19_SF"/>
</dbReference>
<dbReference type="NCBIfam" id="TIGR01050">
    <property type="entry name" value="rpsS_bact"/>
    <property type="match status" value="1"/>
</dbReference>
<dbReference type="PANTHER" id="PTHR11880">
    <property type="entry name" value="RIBOSOMAL PROTEIN S19P FAMILY MEMBER"/>
    <property type="match status" value="1"/>
</dbReference>
<dbReference type="PANTHER" id="PTHR11880:SF8">
    <property type="entry name" value="SMALL RIBOSOMAL SUBUNIT PROTEIN US19M"/>
    <property type="match status" value="1"/>
</dbReference>
<dbReference type="Pfam" id="PF00203">
    <property type="entry name" value="Ribosomal_S19"/>
    <property type="match status" value="1"/>
</dbReference>
<dbReference type="PIRSF" id="PIRSF002144">
    <property type="entry name" value="Ribosomal_S19"/>
    <property type="match status" value="1"/>
</dbReference>
<dbReference type="PRINTS" id="PR00975">
    <property type="entry name" value="RIBOSOMALS19"/>
</dbReference>
<dbReference type="SUPFAM" id="SSF54570">
    <property type="entry name" value="Ribosomal protein S19"/>
    <property type="match status" value="1"/>
</dbReference>
<dbReference type="PROSITE" id="PS00323">
    <property type="entry name" value="RIBOSOMAL_S19"/>
    <property type="match status" value="1"/>
</dbReference>